<comment type="function">
    <text evidence="1">Recombinant toxin that reversibly blocks the voltage-gated potassium channels Shaker (IC(50)=0.054 nM), rKv1.2/KCNA2 (IC(50)=15.6 nM), and rKv1.3/KCNA3 (IC(50)=12.5 uM).</text>
</comment>
<comment type="subcellular location">
    <subcellularLocation>
        <location evidence="4">Secreted</location>
    </subcellularLocation>
</comment>
<comment type="tissue specificity">
    <text evidence="4">Expressed by the venom gland.</text>
</comment>
<comment type="domain">
    <text evidence="4">Has the structural arrangement of an alpha-helix connected to a beta-sheet by disulfide bonds (CSalpha/beta).</text>
</comment>
<comment type="miscellaneous">
    <text evidence="1">Negative results: does not block the potassium channel rKv1.1/KCNA1, even at 50 uM.</text>
</comment>
<comment type="similarity">
    <text evidence="3">Belongs to the short scorpion toxin superfamily. Potassium channel inhibitor family. Alpha-KTx 26 subfamily.</text>
</comment>
<comment type="online information" name="Biological Magnetic Resonance Data Bank">
    <link uri="https://bmrb.io/data_library/summary/index.php?bmrbId=11536"/>
    <text>recombinant MMTX</text>
</comment>
<feature type="signal peptide" evidence="4">
    <location>
        <begin position="1"/>
        <end position="29"/>
    </location>
</feature>
<feature type="peptide" id="PRO_0000438646" description="Mesomartoxin">
    <location>
        <begin position="30"/>
        <end position="58"/>
    </location>
</feature>
<feature type="site" description="Basic residue of the functional dyad; when mesomartoxin-rKv1.2/KCNA2 interaction is modeled, the side chain of this residue is plugged into the pore region of the channel" evidence="4">
    <location>
        <position position="48"/>
    </location>
</feature>
<feature type="site" description="Aromatic residue of the functional dyad; when mesomartoxin-rKv1.2/KCNA2 interaction is modeled, this residue is close to the Val-381 residue of the channel" evidence="1">
    <location>
        <position position="57"/>
    </location>
</feature>
<feature type="disulfide bond" evidence="1 5">
    <location>
        <begin position="31"/>
        <end position="49"/>
    </location>
</feature>
<feature type="disulfide bond" evidence="1 5">
    <location>
        <begin position="35"/>
        <end position="54"/>
    </location>
</feature>
<feature type="disulfide bond" evidence="1 5">
    <location>
        <begin position="39"/>
        <end position="56"/>
    </location>
</feature>
<proteinExistence type="evidence at protein level"/>
<protein>
    <recommendedName>
        <fullName evidence="2">Mesomartoxin</fullName>
        <shortName evidence="2">MMTX</shortName>
    </recommendedName>
</protein>
<dbReference type="PDB" id="2RTZ">
    <property type="method" value="NMR"/>
    <property type="chains" value="A=30-58"/>
</dbReference>
<dbReference type="PDBsum" id="2RTZ"/>
<dbReference type="SMR" id="P0DL65"/>
<dbReference type="GO" id="GO:0005576">
    <property type="term" value="C:extracellular region"/>
    <property type="evidence" value="ECO:0007669"/>
    <property type="project" value="UniProtKB-SubCell"/>
</dbReference>
<dbReference type="GO" id="GO:0015459">
    <property type="term" value="F:potassium channel regulator activity"/>
    <property type="evidence" value="ECO:0007669"/>
    <property type="project" value="UniProtKB-KW"/>
</dbReference>
<dbReference type="GO" id="GO:0090729">
    <property type="term" value="F:toxin activity"/>
    <property type="evidence" value="ECO:0007669"/>
    <property type="project" value="UniProtKB-KW"/>
</dbReference>
<dbReference type="Gene3D" id="3.30.30.10">
    <property type="entry name" value="Knottin, scorpion toxin-like"/>
    <property type="match status" value="1"/>
</dbReference>
<dbReference type="InterPro" id="IPR036574">
    <property type="entry name" value="Scorpion_toxin-like_sf"/>
</dbReference>
<dbReference type="SUPFAM" id="SSF57095">
    <property type="entry name" value="Scorpion toxin-like"/>
    <property type="match status" value="1"/>
</dbReference>
<dbReference type="PROSITE" id="PS01138">
    <property type="entry name" value="SCORP_SHORT_TOXIN"/>
    <property type="match status" value="1"/>
</dbReference>
<organism>
    <name type="scientific">Olivierus martensii</name>
    <name type="common">Manchurian scorpion</name>
    <name type="synonym">Mesobuthus martensii</name>
    <dbReference type="NCBI Taxonomy" id="34649"/>
    <lineage>
        <taxon>Eukaryota</taxon>
        <taxon>Metazoa</taxon>
        <taxon>Ecdysozoa</taxon>
        <taxon>Arthropoda</taxon>
        <taxon>Chelicerata</taxon>
        <taxon>Arachnida</taxon>
        <taxon>Scorpiones</taxon>
        <taxon>Buthida</taxon>
        <taxon>Buthoidea</taxon>
        <taxon>Buthidae</taxon>
        <taxon>Olivierus</taxon>
    </lineage>
</organism>
<reference key="1">
    <citation type="journal article" date="2015" name="Biochem. Pharmacol.">
        <title>Mesomartoxin, a new K(v)1.2-selective scorpion toxin interacting with the channel selectivity filter.</title>
        <authorList>
            <person name="Wang X."/>
            <person name="Umetsu Y."/>
            <person name="Gao B."/>
            <person name="Ohki S."/>
            <person name="Zhu S."/>
        </authorList>
    </citation>
    <scope>NUCLEOTIDE SEQUENCE [MRNA]</scope>
    <scope>FUNCTION</scope>
    <scope>STRUCTURE BY NMR OF 30-58</scope>
    <scope>DISULFIDE BOND</scope>
    <scope>SITES LYS-48 AND TYR-57</scope>
    <source>
        <tissue>Venom gland</tissue>
    </source>
</reference>
<evidence type="ECO:0000269" key="1">
    <source>
    </source>
</evidence>
<evidence type="ECO:0000303" key="2">
    <source>
    </source>
</evidence>
<evidence type="ECO:0000305" key="3"/>
<evidence type="ECO:0000305" key="4">
    <source>
    </source>
</evidence>
<evidence type="ECO:0007744" key="5">
    <source>
        <dbReference type="PDB" id="2RTZ"/>
    </source>
</evidence>
<keyword id="KW-0002">3D-structure</keyword>
<keyword id="KW-1015">Disulfide bond</keyword>
<keyword id="KW-0872">Ion channel impairing toxin</keyword>
<keyword id="KW-0632">Potassium channel impairing toxin</keyword>
<keyword id="KW-0964">Secreted</keyword>
<keyword id="KW-0732">Signal</keyword>
<keyword id="KW-0800">Toxin</keyword>
<keyword id="KW-1220">Voltage-gated potassium channel impairing toxin</keyword>
<accession>P0DL65</accession>
<sequence>MMSRLSVFILIALVLSVIIDVLNNSKVEGACVENCRKYCQDKGARNGKCINSNCHCYY</sequence>
<name>KA26U_OLIMR</name>